<organism>
    <name type="scientific">Methanocorpusculum labreanum (strain ATCC 43576 / DSM 4855 / Z)</name>
    <dbReference type="NCBI Taxonomy" id="410358"/>
    <lineage>
        <taxon>Archaea</taxon>
        <taxon>Methanobacteriati</taxon>
        <taxon>Methanobacteriota</taxon>
        <taxon>Stenosarchaea group</taxon>
        <taxon>Methanomicrobia</taxon>
        <taxon>Methanomicrobiales</taxon>
        <taxon>Methanocorpusculaceae</taxon>
        <taxon>Methanocorpusculum</taxon>
    </lineage>
</organism>
<keyword id="KW-0648">Protein biosynthesis</keyword>
<keyword id="KW-0663">Pyridoxal phosphate</keyword>
<keyword id="KW-1185">Reference proteome</keyword>
<keyword id="KW-0808">Transferase</keyword>
<name>SPSS1_METLZ</name>
<sequence>MKCCDNIDARMVDETSINLDPIQVGGRLTPEAMKAMISWGDGYSVCDNCRKPFRLDYIEKPPLKDFHVDVAEWLGMAQARTVPGARRGFQQVAGTYVEKGDPVLIGALAHYTSYLSVELQKGIVREIPKTADNHITAEDTANRIEDVVREFGIAPKLLYIDHVDYQFGNMHDVKGIAKVAHQYDIPVLYNGVYTVGIMPVNGKDLGVDFIIGSGHKSMAAPAPSGILAATEERANEVFRTTQMEGDLTGRKFGIKEVGILGCSLMGAPIVGLLASFPTVKARVEHFDEELANSKIVVEALRFIEGTKILSEYPRKHTLTRVDTTGSFDQVAQTHKKRGFFLSSALGKKGITGIIPGATKVWKFNTYGMTKKQAEYVADTYLEIAETNGLTIN</sequence>
<proteinExistence type="inferred from homology"/>
<dbReference type="EC" id="2.5.1.73" evidence="1"/>
<dbReference type="EMBL" id="CP000559">
    <property type="protein sequence ID" value="ABN06524.1"/>
    <property type="molecule type" value="Genomic_DNA"/>
</dbReference>
<dbReference type="RefSeq" id="WP_011832725.1">
    <property type="nucleotide sequence ID" value="NC_008942.1"/>
</dbReference>
<dbReference type="SMR" id="A2SQB8"/>
<dbReference type="STRING" id="410358.Mlab_0348"/>
<dbReference type="GeneID" id="4795034"/>
<dbReference type="KEGG" id="mla:Mlab_0348"/>
<dbReference type="eggNOG" id="arCOG00091">
    <property type="taxonomic scope" value="Archaea"/>
</dbReference>
<dbReference type="HOGENOM" id="CLU_060476_0_0_2"/>
<dbReference type="OrthoDB" id="5817at2157"/>
<dbReference type="Proteomes" id="UP000000365">
    <property type="component" value="Chromosome"/>
</dbReference>
<dbReference type="GO" id="GO:0043766">
    <property type="term" value="F:Sep-tRNA:Cys-tRNA synthase activity"/>
    <property type="evidence" value="ECO:0007669"/>
    <property type="project" value="UniProtKB-UniRule"/>
</dbReference>
<dbReference type="GO" id="GO:0006412">
    <property type="term" value="P:translation"/>
    <property type="evidence" value="ECO:0007669"/>
    <property type="project" value="UniProtKB-KW"/>
</dbReference>
<dbReference type="CDD" id="cd06452">
    <property type="entry name" value="SepCysS"/>
    <property type="match status" value="1"/>
</dbReference>
<dbReference type="Gene3D" id="3.90.1150.10">
    <property type="entry name" value="Aspartate Aminotransferase, domain 1"/>
    <property type="match status" value="1"/>
</dbReference>
<dbReference type="Gene3D" id="3.40.640.10">
    <property type="entry name" value="Type I PLP-dependent aspartate aminotransferase-like (Major domain)"/>
    <property type="match status" value="1"/>
</dbReference>
<dbReference type="HAMAP" id="MF_01675">
    <property type="entry name" value="Sep_Cys_tRNA_synth"/>
    <property type="match status" value="1"/>
</dbReference>
<dbReference type="InterPro" id="IPR000192">
    <property type="entry name" value="Aminotrans_V_dom"/>
</dbReference>
<dbReference type="InterPro" id="IPR015424">
    <property type="entry name" value="PyrdxlP-dep_Trfase"/>
</dbReference>
<dbReference type="InterPro" id="IPR015421">
    <property type="entry name" value="PyrdxlP-dep_Trfase_major"/>
</dbReference>
<dbReference type="InterPro" id="IPR015422">
    <property type="entry name" value="PyrdxlP-dep_Trfase_small"/>
</dbReference>
<dbReference type="InterPro" id="IPR013375">
    <property type="entry name" value="Sep_Cys-tRNA_synth_arc"/>
</dbReference>
<dbReference type="NCBIfam" id="NF006810">
    <property type="entry name" value="PRK09331.1"/>
    <property type="match status" value="1"/>
</dbReference>
<dbReference type="NCBIfam" id="TIGR02539">
    <property type="entry name" value="SepCysS"/>
    <property type="match status" value="1"/>
</dbReference>
<dbReference type="PANTHER" id="PTHR43586">
    <property type="entry name" value="CYSTEINE DESULFURASE"/>
    <property type="match status" value="1"/>
</dbReference>
<dbReference type="PANTHER" id="PTHR43586:SF3">
    <property type="entry name" value="O-PHOSPHO-L-SERYL-TRNA:CYS-TRNA SYNTHASE"/>
    <property type="match status" value="1"/>
</dbReference>
<dbReference type="Pfam" id="PF00266">
    <property type="entry name" value="Aminotran_5"/>
    <property type="match status" value="1"/>
</dbReference>
<dbReference type="SUPFAM" id="SSF53383">
    <property type="entry name" value="PLP-dependent transferases"/>
    <property type="match status" value="1"/>
</dbReference>
<feature type="chain" id="PRO_0000359453" description="O-phospho-L-seryl-tRNA:Cys-tRNA synthase 1">
    <location>
        <begin position="1"/>
        <end position="392"/>
    </location>
</feature>
<feature type="binding site" evidence="1">
    <location>
        <begin position="85"/>
        <end position="86"/>
    </location>
    <ligand>
        <name>pyridoxal 5'-phosphate</name>
        <dbReference type="ChEBI" id="CHEBI:597326"/>
    </ligand>
</feature>
<feature type="binding site" evidence="1">
    <location>
        <position position="190"/>
    </location>
    <ligand>
        <name>pyridoxal 5'-phosphate</name>
        <dbReference type="ChEBI" id="CHEBI:597326"/>
    </ligand>
</feature>
<feature type="binding site" evidence="1">
    <location>
        <begin position="213"/>
        <end position="215"/>
    </location>
    <ligand>
        <name>pyridoxal 5'-phosphate</name>
        <dbReference type="ChEBI" id="CHEBI:597326"/>
    </ligand>
</feature>
<feature type="modified residue" description="N6-(pyridoxal phosphate)lysine" evidence="1">
    <location>
        <position position="216"/>
    </location>
</feature>
<evidence type="ECO:0000255" key="1">
    <source>
        <dbReference type="HAMAP-Rule" id="MF_01675"/>
    </source>
</evidence>
<comment type="function">
    <text evidence="1">Converts O-phospho-L-seryl-tRNA(Cys) (Sep-tRNA(Cys)) to L-cysteinyl-tRNA(Cys) (Cys-tRNA(Cys)).</text>
</comment>
<comment type="catalytic activity">
    <reaction evidence="1">
        <text>O-phospho-L-seryl-tRNA(Cys) + hydrogen sulfide + H(+) = L-cysteinyl-tRNA(Cys) + phosphate</text>
        <dbReference type="Rhea" id="RHEA:25686"/>
        <dbReference type="Rhea" id="RHEA-COMP:9679"/>
        <dbReference type="Rhea" id="RHEA-COMP:9719"/>
        <dbReference type="ChEBI" id="CHEBI:15378"/>
        <dbReference type="ChEBI" id="CHEBI:29919"/>
        <dbReference type="ChEBI" id="CHEBI:43474"/>
        <dbReference type="ChEBI" id="CHEBI:78517"/>
        <dbReference type="ChEBI" id="CHEBI:78551"/>
        <dbReference type="EC" id="2.5.1.73"/>
    </reaction>
</comment>
<comment type="cofactor">
    <cofactor evidence="1">
        <name>pyridoxal 5'-phosphate</name>
        <dbReference type="ChEBI" id="CHEBI:597326"/>
    </cofactor>
</comment>
<comment type="subunit">
    <text evidence="1">Homodimer. Interacts with SepRS.</text>
</comment>
<comment type="similarity">
    <text evidence="1">Belongs to the SepCysS family.</text>
</comment>
<protein>
    <recommendedName>
        <fullName evidence="1">O-phospho-L-seryl-tRNA:Cys-tRNA synthase 1</fullName>
        <ecNumber evidence="1">2.5.1.73</ecNumber>
    </recommendedName>
    <alternativeName>
        <fullName evidence="1">Sep-tRNA:Cys-tRNA synthase 1</fullName>
        <shortName evidence="1">SepCysS 1</shortName>
    </alternativeName>
</protein>
<gene>
    <name type="ordered locus">Mlab_0348</name>
</gene>
<accession>A2SQB8</accession>
<reference key="1">
    <citation type="journal article" date="2009" name="Stand. Genomic Sci.">
        <title>Complete genome sequence of Methanocorpusculum labreanum type strain Z.</title>
        <authorList>
            <person name="Anderson I.J."/>
            <person name="Sieprawska-Lupa M."/>
            <person name="Goltsman E."/>
            <person name="Lapidus A."/>
            <person name="Copeland A."/>
            <person name="Glavina Del Rio T."/>
            <person name="Tice H."/>
            <person name="Dalin E."/>
            <person name="Barry K."/>
            <person name="Pitluck S."/>
            <person name="Hauser L."/>
            <person name="Land M."/>
            <person name="Lucas S."/>
            <person name="Richardson P."/>
            <person name="Whitman W.B."/>
            <person name="Kyrpides N.C."/>
        </authorList>
    </citation>
    <scope>NUCLEOTIDE SEQUENCE [LARGE SCALE GENOMIC DNA]</scope>
    <source>
        <strain>ATCC 43576 / DSM 4855 / Z</strain>
    </source>
</reference>